<feature type="chain" id="PRO_0000411329" description="Elongation factor Tu">
    <location>
        <begin position="1"/>
        <end position="398"/>
    </location>
</feature>
<feature type="domain" description="tr-type G">
    <location>
        <begin position="10"/>
        <end position="207"/>
    </location>
</feature>
<feature type="region of interest" description="G1" evidence="1">
    <location>
        <begin position="19"/>
        <end position="26"/>
    </location>
</feature>
<feature type="region of interest" description="G2" evidence="1">
    <location>
        <begin position="63"/>
        <end position="67"/>
    </location>
</feature>
<feature type="region of interest" description="G3" evidence="1">
    <location>
        <begin position="84"/>
        <end position="87"/>
    </location>
</feature>
<feature type="region of interest" description="G4" evidence="1">
    <location>
        <begin position="139"/>
        <end position="142"/>
    </location>
</feature>
<feature type="region of interest" description="G5" evidence="1">
    <location>
        <begin position="177"/>
        <end position="179"/>
    </location>
</feature>
<feature type="binding site" evidence="2">
    <location>
        <begin position="19"/>
        <end position="26"/>
    </location>
    <ligand>
        <name>GTP</name>
        <dbReference type="ChEBI" id="CHEBI:37565"/>
    </ligand>
</feature>
<feature type="binding site" evidence="2">
    <location>
        <position position="26"/>
    </location>
    <ligand>
        <name>Mg(2+)</name>
        <dbReference type="ChEBI" id="CHEBI:18420"/>
    </ligand>
</feature>
<feature type="binding site" evidence="2">
    <location>
        <begin position="84"/>
        <end position="88"/>
    </location>
    <ligand>
        <name>GTP</name>
        <dbReference type="ChEBI" id="CHEBI:37565"/>
    </ligand>
</feature>
<feature type="binding site" evidence="2">
    <location>
        <begin position="139"/>
        <end position="142"/>
    </location>
    <ligand>
        <name>GTP</name>
        <dbReference type="ChEBI" id="CHEBI:37565"/>
    </ligand>
</feature>
<sequence length="398" mass="43826">MAKEKYDRSKPHVNIGTIGHVDHGKTTLTAAITTVLARRLPSSVNQPKDYASIDAAPEERERGITINTAHVEYETATRHYAHIDAPGHADYVKNMITGAAQMDGAILVVASTDGPMPQTREHILLSRQVGVKHLIVFMNKVDLVDDEELLELVEMEIRDLLSEYDFPGDDLPVIQGSALKALEGDTKFEDIIMELMDTVDSYIPEPERDTDKPLLLPVEDVFSITGRGTVASGRIDRGTVRVNDEIEIVGIKEETKKAVVTGVEMFRKQLDEGLAGDNVGILLRGVQRDEIERGQVIAKPGSINPHTKFKGEVYILSKDEGGRHTPFFNNYRPQFYFRTTDVTGSIELPAGTEMVMPGDNVTINVELIHPIAVEQGTTFSIREGGRTVGSGIVSEIEA</sequence>
<dbReference type="EC" id="3.6.5.3" evidence="2"/>
<dbReference type="EMBL" id="BA000034">
    <property type="protein sequence ID" value="BAC64518.1"/>
    <property type="molecule type" value="Genomic_DNA"/>
</dbReference>
<dbReference type="RefSeq" id="WP_002990541.1">
    <property type="nucleotide sequence ID" value="NC_004606.1"/>
</dbReference>
<dbReference type="SMR" id="P0DA83"/>
<dbReference type="KEGG" id="sps:SPs1423"/>
<dbReference type="HOGENOM" id="CLU_007265_0_1_9"/>
<dbReference type="GO" id="GO:0005829">
    <property type="term" value="C:cytosol"/>
    <property type="evidence" value="ECO:0007669"/>
    <property type="project" value="TreeGrafter"/>
</dbReference>
<dbReference type="GO" id="GO:0005525">
    <property type="term" value="F:GTP binding"/>
    <property type="evidence" value="ECO:0007669"/>
    <property type="project" value="UniProtKB-UniRule"/>
</dbReference>
<dbReference type="GO" id="GO:0003924">
    <property type="term" value="F:GTPase activity"/>
    <property type="evidence" value="ECO:0007669"/>
    <property type="project" value="InterPro"/>
</dbReference>
<dbReference type="GO" id="GO:0003746">
    <property type="term" value="F:translation elongation factor activity"/>
    <property type="evidence" value="ECO:0007669"/>
    <property type="project" value="UniProtKB-UniRule"/>
</dbReference>
<dbReference type="CDD" id="cd01884">
    <property type="entry name" value="EF_Tu"/>
    <property type="match status" value="1"/>
</dbReference>
<dbReference type="CDD" id="cd03697">
    <property type="entry name" value="EFTU_II"/>
    <property type="match status" value="1"/>
</dbReference>
<dbReference type="CDD" id="cd03707">
    <property type="entry name" value="EFTU_III"/>
    <property type="match status" value="1"/>
</dbReference>
<dbReference type="FunFam" id="2.40.30.10:FF:000001">
    <property type="entry name" value="Elongation factor Tu"/>
    <property type="match status" value="1"/>
</dbReference>
<dbReference type="FunFam" id="3.40.50.300:FF:000003">
    <property type="entry name" value="Elongation factor Tu"/>
    <property type="match status" value="1"/>
</dbReference>
<dbReference type="Gene3D" id="3.40.50.300">
    <property type="entry name" value="P-loop containing nucleotide triphosphate hydrolases"/>
    <property type="match status" value="1"/>
</dbReference>
<dbReference type="Gene3D" id="2.40.30.10">
    <property type="entry name" value="Translation factors"/>
    <property type="match status" value="2"/>
</dbReference>
<dbReference type="HAMAP" id="MF_00118_B">
    <property type="entry name" value="EF_Tu_B"/>
    <property type="match status" value="1"/>
</dbReference>
<dbReference type="InterPro" id="IPR041709">
    <property type="entry name" value="EF-Tu_GTP-bd"/>
</dbReference>
<dbReference type="InterPro" id="IPR050055">
    <property type="entry name" value="EF-Tu_GTPase"/>
</dbReference>
<dbReference type="InterPro" id="IPR004161">
    <property type="entry name" value="EFTu-like_2"/>
</dbReference>
<dbReference type="InterPro" id="IPR033720">
    <property type="entry name" value="EFTU_2"/>
</dbReference>
<dbReference type="InterPro" id="IPR031157">
    <property type="entry name" value="G_TR_CS"/>
</dbReference>
<dbReference type="InterPro" id="IPR027417">
    <property type="entry name" value="P-loop_NTPase"/>
</dbReference>
<dbReference type="InterPro" id="IPR005225">
    <property type="entry name" value="Small_GTP-bd"/>
</dbReference>
<dbReference type="InterPro" id="IPR000795">
    <property type="entry name" value="T_Tr_GTP-bd_dom"/>
</dbReference>
<dbReference type="InterPro" id="IPR009000">
    <property type="entry name" value="Transl_B-barrel_sf"/>
</dbReference>
<dbReference type="InterPro" id="IPR009001">
    <property type="entry name" value="Transl_elong_EF1A/Init_IF2_C"/>
</dbReference>
<dbReference type="InterPro" id="IPR004541">
    <property type="entry name" value="Transl_elong_EFTu/EF1A_bac/org"/>
</dbReference>
<dbReference type="InterPro" id="IPR004160">
    <property type="entry name" value="Transl_elong_EFTu/EF1A_C"/>
</dbReference>
<dbReference type="NCBIfam" id="TIGR00485">
    <property type="entry name" value="EF-Tu"/>
    <property type="match status" value="1"/>
</dbReference>
<dbReference type="NCBIfam" id="NF000766">
    <property type="entry name" value="PRK00049.1"/>
    <property type="match status" value="1"/>
</dbReference>
<dbReference type="NCBIfam" id="NF009372">
    <property type="entry name" value="PRK12735.1"/>
    <property type="match status" value="1"/>
</dbReference>
<dbReference type="NCBIfam" id="NF009373">
    <property type="entry name" value="PRK12736.1"/>
    <property type="match status" value="1"/>
</dbReference>
<dbReference type="NCBIfam" id="TIGR00231">
    <property type="entry name" value="small_GTP"/>
    <property type="match status" value="1"/>
</dbReference>
<dbReference type="PANTHER" id="PTHR43721:SF22">
    <property type="entry name" value="ELONGATION FACTOR TU, MITOCHONDRIAL"/>
    <property type="match status" value="1"/>
</dbReference>
<dbReference type="PANTHER" id="PTHR43721">
    <property type="entry name" value="ELONGATION FACTOR TU-RELATED"/>
    <property type="match status" value="1"/>
</dbReference>
<dbReference type="Pfam" id="PF00009">
    <property type="entry name" value="GTP_EFTU"/>
    <property type="match status" value="1"/>
</dbReference>
<dbReference type="Pfam" id="PF03144">
    <property type="entry name" value="GTP_EFTU_D2"/>
    <property type="match status" value="1"/>
</dbReference>
<dbReference type="Pfam" id="PF03143">
    <property type="entry name" value="GTP_EFTU_D3"/>
    <property type="match status" value="1"/>
</dbReference>
<dbReference type="PRINTS" id="PR00315">
    <property type="entry name" value="ELONGATNFCT"/>
</dbReference>
<dbReference type="SUPFAM" id="SSF50465">
    <property type="entry name" value="EF-Tu/eEF-1alpha/eIF2-gamma C-terminal domain"/>
    <property type="match status" value="1"/>
</dbReference>
<dbReference type="SUPFAM" id="SSF52540">
    <property type="entry name" value="P-loop containing nucleoside triphosphate hydrolases"/>
    <property type="match status" value="1"/>
</dbReference>
<dbReference type="SUPFAM" id="SSF50447">
    <property type="entry name" value="Translation proteins"/>
    <property type="match status" value="1"/>
</dbReference>
<dbReference type="PROSITE" id="PS00301">
    <property type="entry name" value="G_TR_1"/>
    <property type="match status" value="1"/>
</dbReference>
<dbReference type="PROSITE" id="PS51722">
    <property type="entry name" value="G_TR_2"/>
    <property type="match status" value="1"/>
</dbReference>
<comment type="function">
    <text evidence="2">GTP hydrolase that promotes the GTP-dependent binding of aminoacyl-tRNA to the A-site of ribosomes during protein biosynthesis.</text>
</comment>
<comment type="catalytic activity">
    <reaction evidence="2">
        <text>GTP + H2O = GDP + phosphate + H(+)</text>
        <dbReference type="Rhea" id="RHEA:19669"/>
        <dbReference type="ChEBI" id="CHEBI:15377"/>
        <dbReference type="ChEBI" id="CHEBI:15378"/>
        <dbReference type="ChEBI" id="CHEBI:37565"/>
        <dbReference type="ChEBI" id="CHEBI:43474"/>
        <dbReference type="ChEBI" id="CHEBI:58189"/>
        <dbReference type="EC" id="3.6.5.3"/>
    </reaction>
    <physiologicalReaction direction="left-to-right" evidence="2">
        <dbReference type="Rhea" id="RHEA:19670"/>
    </physiologicalReaction>
</comment>
<comment type="subunit">
    <text evidence="2">Monomer.</text>
</comment>
<comment type="subcellular location">
    <subcellularLocation>
        <location evidence="2">Cytoplasm</location>
    </subcellularLocation>
</comment>
<comment type="similarity">
    <text evidence="2">Belongs to the TRAFAC class translation factor GTPase superfamily. Classic translation factor GTPase family. EF-Tu/EF-1A subfamily.</text>
</comment>
<gene>
    <name evidence="2" type="primary">tuf</name>
    <name type="synonym">tufA</name>
    <name type="ordered locus">SPs1423</name>
</gene>
<protein>
    <recommendedName>
        <fullName evidence="2">Elongation factor Tu</fullName>
        <shortName evidence="2">EF-Tu</shortName>
        <ecNumber evidence="2">3.6.5.3</ecNumber>
    </recommendedName>
</protein>
<accession>P0DA83</accession>
<accession>Q8K872</accession>
<organism>
    <name type="scientific">Streptococcus pyogenes serotype M3 (strain SSI-1)</name>
    <dbReference type="NCBI Taxonomy" id="193567"/>
    <lineage>
        <taxon>Bacteria</taxon>
        <taxon>Bacillati</taxon>
        <taxon>Bacillota</taxon>
        <taxon>Bacilli</taxon>
        <taxon>Lactobacillales</taxon>
        <taxon>Streptococcaceae</taxon>
        <taxon>Streptococcus</taxon>
    </lineage>
</organism>
<name>EFTU_STRPQ</name>
<reference key="1">
    <citation type="journal article" date="2003" name="Genome Res.">
        <title>Genome sequence of an M3 strain of Streptococcus pyogenes reveals a large-scale genomic rearrangement in invasive strains and new insights into phage evolution.</title>
        <authorList>
            <person name="Nakagawa I."/>
            <person name="Kurokawa K."/>
            <person name="Yamashita A."/>
            <person name="Nakata M."/>
            <person name="Tomiyasu Y."/>
            <person name="Okahashi N."/>
            <person name="Kawabata S."/>
            <person name="Yamazaki K."/>
            <person name="Shiba T."/>
            <person name="Yasunaga T."/>
            <person name="Hayashi H."/>
            <person name="Hattori M."/>
            <person name="Hamada S."/>
        </authorList>
    </citation>
    <scope>NUCLEOTIDE SEQUENCE [LARGE SCALE GENOMIC DNA]</scope>
    <source>
        <strain>SSI-1</strain>
    </source>
</reference>
<keyword id="KW-0963">Cytoplasm</keyword>
<keyword id="KW-0251">Elongation factor</keyword>
<keyword id="KW-0342">GTP-binding</keyword>
<keyword id="KW-0378">Hydrolase</keyword>
<keyword id="KW-0460">Magnesium</keyword>
<keyword id="KW-0479">Metal-binding</keyword>
<keyword id="KW-0547">Nucleotide-binding</keyword>
<keyword id="KW-0648">Protein biosynthesis</keyword>
<evidence type="ECO:0000250" key="1"/>
<evidence type="ECO:0000255" key="2">
    <source>
        <dbReference type="HAMAP-Rule" id="MF_00118"/>
    </source>
</evidence>
<proteinExistence type="inferred from homology"/>